<gene>
    <name evidence="2" type="primary">rpsL</name>
    <name type="ordered locus">SAV0545</name>
</gene>
<proteinExistence type="inferred from homology"/>
<sequence>MPTINQLVRKPRQSKIKKSDSPALNKGFNSKKKKFTDLNSPQKRGVCTRVGTMTPKKPNSALRKYARVRLSNNIEINAYIPGIGHNLQEHSVVLVRGGRVKDLPGVRYHIVRGALDTSGVDGRRQGRSLYGTKKPKN</sequence>
<feature type="chain" id="PRO_0000146309" description="Small ribosomal subunit protein uS12">
    <location>
        <begin position="1"/>
        <end position="137"/>
    </location>
</feature>
<feature type="region of interest" description="Disordered" evidence="3">
    <location>
        <begin position="1"/>
        <end position="55"/>
    </location>
</feature>
<feature type="region of interest" description="Disordered" evidence="3">
    <location>
        <begin position="118"/>
        <end position="137"/>
    </location>
</feature>
<feature type="modified residue" description="3-methylthioaspartic acid" evidence="1">
    <location>
        <position position="102"/>
    </location>
</feature>
<keyword id="KW-0488">Methylation</keyword>
<keyword id="KW-0687">Ribonucleoprotein</keyword>
<keyword id="KW-0689">Ribosomal protein</keyword>
<keyword id="KW-0694">RNA-binding</keyword>
<keyword id="KW-0699">rRNA-binding</keyword>
<keyword id="KW-0820">tRNA-binding</keyword>
<dbReference type="EMBL" id="BA000017">
    <property type="protein sequence ID" value="BAB56707.1"/>
    <property type="molecule type" value="Genomic_DNA"/>
</dbReference>
<dbReference type="RefSeq" id="WP_001142337.1">
    <property type="nucleotide sequence ID" value="NC_002758.2"/>
</dbReference>
<dbReference type="SMR" id="P0A0G7"/>
<dbReference type="GeneID" id="98344879"/>
<dbReference type="KEGG" id="sav:SAV0545"/>
<dbReference type="HOGENOM" id="CLU_104295_1_2_9"/>
<dbReference type="PhylomeDB" id="P0A0G7"/>
<dbReference type="Proteomes" id="UP000002481">
    <property type="component" value="Chromosome"/>
</dbReference>
<dbReference type="GO" id="GO:0015935">
    <property type="term" value="C:small ribosomal subunit"/>
    <property type="evidence" value="ECO:0007669"/>
    <property type="project" value="InterPro"/>
</dbReference>
<dbReference type="GO" id="GO:0019843">
    <property type="term" value="F:rRNA binding"/>
    <property type="evidence" value="ECO:0007669"/>
    <property type="project" value="UniProtKB-UniRule"/>
</dbReference>
<dbReference type="GO" id="GO:0003735">
    <property type="term" value="F:structural constituent of ribosome"/>
    <property type="evidence" value="ECO:0007669"/>
    <property type="project" value="InterPro"/>
</dbReference>
<dbReference type="GO" id="GO:0000049">
    <property type="term" value="F:tRNA binding"/>
    <property type="evidence" value="ECO:0007669"/>
    <property type="project" value="UniProtKB-UniRule"/>
</dbReference>
<dbReference type="GO" id="GO:0006412">
    <property type="term" value="P:translation"/>
    <property type="evidence" value="ECO:0007669"/>
    <property type="project" value="UniProtKB-UniRule"/>
</dbReference>
<dbReference type="CDD" id="cd03368">
    <property type="entry name" value="Ribosomal_S12"/>
    <property type="match status" value="1"/>
</dbReference>
<dbReference type="FunFam" id="2.40.50.140:FF:000001">
    <property type="entry name" value="30S ribosomal protein S12"/>
    <property type="match status" value="1"/>
</dbReference>
<dbReference type="Gene3D" id="2.40.50.140">
    <property type="entry name" value="Nucleic acid-binding proteins"/>
    <property type="match status" value="1"/>
</dbReference>
<dbReference type="HAMAP" id="MF_00403_B">
    <property type="entry name" value="Ribosomal_uS12_B"/>
    <property type="match status" value="1"/>
</dbReference>
<dbReference type="InterPro" id="IPR012340">
    <property type="entry name" value="NA-bd_OB-fold"/>
</dbReference>
<dbReference type="InterPro" id="IPR006032">
    <property type="entry name" value="Ribosomal_uS12"/>
</dbReference>
<dbReference type="InterPro" id="IPR005679">
    <property type="entry name" value="Ribosomal_uS12_bac"/>
</dbReference>
<dbReference type="NCBIfam" id="TIGR00981">
    <property type="entry name" value="rpsL_bact"/>
    <property type="match status" value="1"/>
</dbReference>
<dbReference type="PANTHER" id="PTHR11652">
    <property type="entry name" value="30S RIBOSOMAL PROTEIN S12 FAMILY MEMBER"/>
    <property type="match status" value="1"/>
</dbReference>
<dbReference type="Pfam" id="PF00164">
    <property type="entry name" value="Ribosom_S12_S23"/>
    <property type="match status" value="1"/>
</dbReference>
<dbReference type="PIRSF" id="PIRSF002133">
    <property type="entry name" value="Ribosomal_S12/S23"/>
    <property type="match status" value="1"/>
</dbReference>
<dbReference type="PRINTS" id="PR01034">
    <property type="entry name" value="RIBOSOMALS12"/>
</dbReference>
<dbReference type="SUPFAM" id="SSF50249">
    <property type="entry name" value="Nucleic acid-binding proteins"/>
    <property type="match status" value="1"/>
</dbReference>
<dbReference type="PROSITE" id="PS00055">
    <property type="entry name" value="RIBOSOMAL_S12"/>
    <property type="match status" value="1"/>
</dbReference>
<accession>P0A0G7</accession>
<accession>P48942</accession>
<name>RS12_STAAM</name>
<evidence type="ECO:0000250" key="1"/>
<evidence type="ECO:0000255" key="2">
    <source>
        <dbReference type="HAMAP-Rule" id="MF_00403"/>
    </source>
</evidence>
<evidence type="ECO:0000256" key="3">
    <source>
        <dbReference type="SAM" id="MobiDB-lite"/>
    </source>
</evidence>
<evidence type="ECO:0000305" key="4"/>
<comment type="function">
    <text evidence="2">With S4 and S5 plays an important role in translational accuracy.</text>
</comment>
<comment type="function">
    <text evidence="2">Interacts with and stabilizes bases of the 16S rRNA that are involved in tRNA selection in the A site and with the mRNA backbone. Located at the interface of the 30S and 50S subunits, it traverses the body of the 30S subunit contacting proteins on the other side and probably holding the rRNA structure together. The combined cluster of proteins S8, S12 and S17 appears to hold together the shoulder and platform of the 30S subunit.</text>
</comment>
<comment type="subunit">
    <text evidence="2">Part of the 30S ribosomal subunit. Contacts proteins S8 and S17. May interact with IF1 in the 30S initiation complex.</text>
</comment>
<comment type="similarity">
    <text evidence="2">Belongs to the universal ribosomal protein uS12 family.</text>
</comment>
<reference key="1">
    <citation type="journal article" date="2001" name="Lancet">
        <title>Whole genome sequencing of meticillin-resistant Staphylococcus aureus.</title>
        <authorList>
            <person name="Kuroda M."/>
            <person name="Ohta T."/>
            <person name="Uchiyama I."/>
            <person name="Baba T."/>
            <person name="Yuzawa H."/>
            <person name="Kobayashi I."/>
            <person name="Cui L."/>
            <person name="Oguchi A."/>
            <person name="Aoki K."/>
            <person name="Nagai Y."/>
            <person name="Lian J.-Q."/>
            <person name="Ito T."/>
            <person name="Kanamori M."/>
            <person name="Matsumaru H."/>
            <person name="Maruyama A."/>
            <person name="Murakami H."/>
            <person name="Hosoyama A."/>
            <person name="Mizutani-Ui Y."/>
            <person name="Takahashi N.K."/>
            <person name="Sawano T."/>
            <person name="Inoue R."/>
            <person name="Kaito C."/>
            <person name="Sekimizu K."/>
            <person name="Hirakawa H."/>
            <person name="Kuhara S."/>
            <person name="Goto S."/>
            <person name="Yabuzaki J."/>
            <person name="Kanehisa M."/>
            <person name="Yamashita A."/>
            <person name="Oshima K."/>
            <person name="Furuya K."/>
            <person name="Yoshino C."/>
            <person name="Shiba T."/>
            <person name="Hattori M."/>
            <person name="Ogasawara N."/>
            <person name="Hayashi H."/>
            <person name="Hiramatsu K."/>
        </authorList>
    </citation>
    <scope>NUCLEOTIDE SEQUENCE [LARGE SCALE GENOMIC DNA]</scope>
    <source>
        <strain>Mu50 / ATCC 700699</strain>
    </source>
</reference>
<organism>
    <name type="scientific">Staphylococcus aureus (strain Mu50 / ATCC 700699)</name>
    <dbReference type="NCBI Taxonomy" id="158878"/>
    <lineage>
        <taxon>Bacteria</taxon>
        <taxon>Bacillati</taxon>
        <taxon>Bacillota</taxon>
        <taxon>Bacilli</taxon>
        <taxon>Bacillales</taxon>
        <taxon>Staphylococcaceae</taxon>
        <taxon>Staphylococcus</taxon>
    </lineage>
</organism>
<protein>
    <recommendedName>
        <fullName evidence="2">Small ribosomal subunit protein uS12</fullName>
    </recommendedName>
    <alternativeName>
        <fullName evidence="4">30S ribosomal protein S12</fullName>
    </alternativeName>
</protein>